<reference key="1">
    <citation type="submission" date="2007-03" db="EMBL/GenBank/DDBJ databases">
        <title>Complete sequence of chromosome 1 of Burkholderia vietnamiensis G4.</title>
        <authorList>
            <consortium name="US DOE Joint Genome Institute"/>
            <person name="Copeland A."/>
            <person name="Lucas S."/>
            <person name="Lapidus A."/>
            <person name="Barry K."/>
            <person name="Detter J.C."/>
            <person name="Glavina del Rio T."/>
            <person name="Hammon N."/>
            <person name="Israni S."/>
            <person name="Dalin E."/>
            <person name="Tice H."/>
            <person name="Pitluck S."/>
            <person name="Chain P."/>
            <person name="Malfatti S."/>
            <person name="Shin M."/>
            <person name="Vergez L."/>
            <person name="Schmutz J."/>
            <person name="Larimer F."/>
            <person name="Land M."/>
            <person name="Hauser L."/>
            <person name="Kyrpides N."/>
            <person name="Tiedje J."/>
            <person name="Richardson P."/>
        </authorList>
    </citation>
    <scope>NUCLEOTIDE SEQUENCE [LARGE SCALE GENOMIC DNA]</scope>
    <source>
        <strain>G4 / LMG 22486</strain>
    </source>
</reference>
<sequence>MTSSLSRPSGRRADELRKVALTRHYTKHAEGSVLVEFGDTKVICTASVVERVPEFLRERGQGWLTAEYGMLPRATHTRSDREAARGKQTGRTQEIQRLIGRALRAVFDLEALGPRTINIDCDVIQADGGTRTASITGAFVAAHDAVSKLIAAGKLARSPITDHVAAISVGVYEGAPVLDLDYAEDSRCDTDMNVVMTGAGGFVEVQGTAEGVPFSRAEMNALLDLAQAGIGRLVQLQKDVLGADHV</sequence>
<proteinExistence type="inferred from homology"/>
<comment type="function">
    <text evidence="1">Phosphorolytic 3'-5' exoribonuclease that plays an important role in tRNA 3'-end maturation. Removes nucleotide residues following the 3'-CCA terminus of tRNAs; can also add nucleotides to the ends of RNA molecules by using nucleoside diphosphates as substrates, but this may not be physiologically important. Probably plays a role in initiation of 16S rRNA degradation (leading to ribosome degradation) during starvation.</text>
</comment>
<comment type="catalytic activity">
    <reaction evidence="1">
        <text>tRNA(n+1) + phosphate = tRNA(n) + a ribonucleoside 5'-diphosphate</text>
        <dbReference type="Rhea" id="RHEA:10628"/>
        <dbReference type="Rhea" id="RHEA-COMP:17343"/>
        <dbReference type="Rhea" id="RHEA-COMP:17344"/>
        <dbReference type="ChEBI" id="CHEBI:43474"/>
        <dbReference type="ChEBI" id="CHEBI:57930"/>
        <dbReference type="ChEBI" id="CHEBI:173114"/>
        <dbReference type="EC" id="2.7.7.56"/>
    </reaction>
</comment>
<comment type="subunit">
    <text evidence="1">Homohexameric ring arranged as a trimer of dimers.</text>
</comment>
<comment type="similarity">
    <text evidence="1">Belongs to the RNase PH family.</text>
</comment>
<evidence type="ECO:0000255" key="1">
    <source>
        <dbReference type="HAMAP-Rule" id="MF_00564"/>
    </source>
</evidence>
<feature type="chain" id="PRO_1000024792" description="Ribonuclease PH">
    <location>
        <begin position="1"/>
        <end position="246"/>
    </location>
</feature>
<feature type="binding site" evidence="1">
    <location>
        <position position="91"/>
    </location>
    <ligand>
        <name>phosphate</name>
        <dbReference type="ChEBI" id="CHEBI:43474"/>
        <note>substrate</note>
    </ligand>
</feature>
<feature type="binding site" evidence="1">
    <location>
        <begin position="129"/>
        <end position="131"/>
    </location>
    <ligand>
        <name>phosphate</name>
        <dbReference type="ChEBI" id="CHEBI:43474"/>
        <note>substrate</note>
    </ligand>
</feature>
<protein>
    <recommendedName>
        <fullName evidence="1">Ribonuclease PH</fullName>
        <shortName evidence="1">RNase PH</shortName>
        <ecNumber evidence="1">2.7.7.56</ecNumber>
    </recommendedName>
    <alternativeName>
        <fullName evidence="1">tRNA nucleotidyltransferase</fullName>
    </alternativeName>
</protein>
<name>RNPH_BURVG</name>
<gene>
    <name evidence="1" type="primary">rph</name>
    <name type="ordered locus">Bcep1808_0914</name>
</gene>
<organism>
    <name type="scientific">Burkholderia vietnamiensis (strain G4 / LMG 22486)</name>
    <name type="common">Burkholderia cepacia (strain R1808)</name>
    <dbReference type="NCBI Taxonomy" id="269482"/>
    <lineage>
        <taxon>Bacteria</taxon>
        <taxon>Pseudomonadati</taxon>
        <taxon>Pseudomonadota</taxon>
        <taxon>Betaproteobacteria</taxon>
        <taxon>Burkholderiales</taxon>
        <taxon>Burkholderiaceae</taxon>
        <taxon>Burkholderia</taxon>
        <taxon>Burkholderia cepacia complex</taxon>
    </lineage>
</organism>
<accession>A4JCC2</accession>
<keyword id="KW-0548">Nucleotidyltransferase</keyword>
<keyword id="KW-0694">RNA-binding</keyword>
<keyword id="KW-0698">rRNA processing</keyword>
<keyword id="KW-0808">Transferase</keyword>
<keyword id="KW-0819">tRNA processing</keyword>
<keyword id="KW-0820">tRNA-binding</keyword>
<dbReference type="EC" id="2.7.7.56" evidence="1"/>
<dbReference type="EMBL" id="CP000614">
    <property type="protein sequence ID" value="ABO53925.1"/>
    <property type="molecule type" value="Genomic_DNA"/>
</dbReference>
<dbReference type="SMR" id="A4JCC2"/>
<dbReference type="KEGG" id="bvi:Bcep1808_0914"/>
<dbReference type="eggNOG" id="COG0689">
    <property type="taxonomic scope" value="Bacteria"/>
</dbReference>
<dbReference type="HOGENOM" id="CLU_050858_0_0_4"/>
<dbReference type="Proteomes" id="UP000002287">
    <property type="component" value="Chromosome 1"/>
</dbReference>
<dbReference type="GO" id="GO:0000175">
    <property type="term" value="F:3'-5'-RNA exonuclease activity"/>
    <property type="evidence" value="ECO:0007669"/>
    <property type="project" value="UniProtKB-UniRule"/>
</dbReference>
<dbReference type="GO" id="GO:0000049">
    <property type="term" value="F:tRNA binding"/>
    <property type="evidence" value="ECO:0007669"/>
    <property type="project" value="UniProtKB-UniRule"/>
</dbReference>
<dbReference type="GO" id="GO:0009022">
    <property type="term" value="F:tRNA nucleotidyltransferase activity"/>
    <property type="evidence" value="ECO:0007669"/>
    <property type="project" value="UniProtKB-UniRule"/>
</dbReference>
<dbReference type="GO" id="GO:0016075">
    <property type="term" value="P:rRNA catabolic process"/>
    <property type="evidence" value="ECO:0007669"/>
    <property type="project" value="UniProtKB-UniRule"/>
</dbReference>
<dbReference type="GO" id="GO:0006364">
    <property type="term" value="P:rRNA processing"/>
    <property type="evidence" value="ECO:0007669"/>
    <property type="project" value="UniProtKB-KW"/>
</dbReference>
<dbReference type="GO" id="GO:0008033">
    <property type="term" value="P:tRNA processing"/>
    <property type="evidence" value="ECO:0007669"/>
    <property type="project" value="UniProtKB-UniRule"/>
</dbReference>
<dbReference type="CDD" id="cd11362">
    <property type="entry name" value="RNase_PH_bact"/>
    <property type="match status" value="1"/>
</dbReference>
<dbReference type="FunFam" id="3.30.230.70:FF:000003">
    <property type="entry name" value="Ribonuclease PH"/>
    <property type="match status" value="1"/>
</dbReference>
<dbReference type="Gene3D" id="3.30.230.70">
    <property type="entry name" value="GHMP Kinase, N-terminal domain"/>
    <property type="match status" value="1"/>
</dbReference>
<dbReference type="HAMAP" id="MF_00564">
    <property type="entry name" value="RNase_PH"/>
    <property type="match status" value="1"/>
</dbReference>
<dbReference type="InterPro" id="IPR001247">
    <property type="entry name" value="ExoRNase_PH_dom1"/>
</dbReference>
<dbReference type="InterPro" id="IPR015847">
    <property type="entry name" value="ExoRNase_PH_dom2"/>
</dbReference>
<dbReference type="InterPro" id="IPR036345">
    <property type="entry name" value="ExoRNase_PH_dom2_sf"/>
</dbReference>
<dbReference type="InterPro" id="IPR027408">
    <property type="entry name" value="PNPase/RNase_PH_dom_sf"/>
</dbReference>
<dbReference type="InterPro" id="IPR020568">
    <property type="entry name" value="Ribosomal_Su5_D2-typ_SF"/>
</dbReference>
<dbReference type="InterPro" id="IPR050080">
    <property type="entry name" value="RNase_PH"/>
</dbReference>
<dbReference type="InterPro" id="IPR002381">
    <property type="entry name" value="RNase_PH_bac-type"/>
</dbReference>
<dbReference type="InterPro" id="IPR018336">
    <property type="entry name" value="RNase_PH_CS"/>
</dbReference>
<dbReference type="NCBIfam" id="TIGR01966">
    <property type="entry name" value="RNasePH"/>
    <property type="match status" value="1"/>
</dbReference>
<dbReference type="PANTHER" id="PTHR11953">
    <property type="entry name" value="EXOSOME COMPLEX COMPONENT"/>
    <property type="match status" value="1"/>
</dbReference>
<dbReference type="PANTHER" id="PTHR11953:SF0">
    <property type="entry name" value="EXOSOME COMPLEX COMPONENT RRP41"/>
    <property type="match status" value="1"/>
</dbReference>
<dbReference type="Pfam" id="PF01138">
    <property type="entry name" value="RNase_PH"/>
    <property type="match status" value="1"/>
</dbReference>
<dbReference type="Pfam" id="PF03725">
    <property type="entry name" value="RNase_PH_C"/>
    <property type="match status" value="1"/>
</dbReference>
<dbReference type="SUPFAM" id="SSF55666">
    <property type="entry name" value="Ribonuclease PH domain 2-like"/>
    <property type="match status" value="1"/>
</dbReference>
<dbReference type="SUPFAM" id="SSF54211">
    <property type="entry name" value="Ribosomal protein S5 domain 2-like"/>
    <property type="match status" value="1"/>
</dbReference>
<dbReference type="PROSITE" id="PS01277">
    <property type="entry name" value="RIBONUCLEASE_PH"/>
    <property type="match status" value="1"/>
</dbReference>